<organism>
    <name type="scientific">Staphylococcus aureus (strain Mu50 / ATCC 700699)</name>
    <dbReference type="NCBI Taxonomy" id="158878"/>
    <lineage>
        <taxon>Bacteria</taxon>
        <taxon>Bacillati</taxon>
        <taxon>Bacillota</taxon>
        <taxon>Bacilli</taxon>
        <taxon>Bacillales</taxon>
        <taxon>Staphylococcaceae</taxon>
        <taxon>Staphylococcus</taxon>
    </lineage>
</organism>
<accession>P65404</accession>
<accession>Q99S03</accession>
<protein>
    <recommendedName>
        <fullName evidence="1">Probable molybdenum cofactor guanylyltransferase</fullName>
        <shortName evidence="1">MoCo guanylyltransferase</shortName>
        <ecNumber evidence="1">2.7.7.77</ecNumber>
    </recommendedName>
    <alternativeName>
        <fullName evidence="1">GTP:molybdopterin guanylyltransferase</fullName>
    </alternativeName>
    <alternativeName>
        <fullName evidence="1">Mo-MPT guanylyltransferase</fullName>
    </alternativeName>
    <alternativeName>
        <fullName evidence="1">Molybdopterin guanylyltransferase</fullName>
    </alternativeName>
    <alternativeName>
        <fullName evidence="1">Molybdopterin-guanine dinucleotide synthase</fullName>
        <shortName evidence="1">MGD synthase</shortName>
    </alternativeName>
</protein>
<sequence>MKAIILAGGHSVRFGKPKAFAEVNGETFYSRVIKTLESTNMFNEIIISTNAQLATQFKYPNVVIDDENHNDKGPLAGIYTIMKQHPEEELFFVVSVDTPMITGKAVSTLYQFLVSHLIENHLDVAAFKEDGRFIPTIAFYSPNALGAITKALHSDNYSFKNIYHELSTDYLDVRDVDAPSYWYKNINYQHDLDALIQKL</sequence>
<name>MOBA_STAAM</name>
<comment type="function">
    <text evidence="1">Transfers a GMP moiety from GTP to Mo-molybdopterin (Mo-MPT) cofactor (Moco or molybdenum cofactor) to form Mo-molybdopterin guanine dinucleotide (Mo-MGD) cofactor.</text>
</comment>
<comment type="catalytic activity">
    <reaction evidence="1">
        <text>Mo-molybdopterin + GTP + H(+) = Mo-molybdopterin guanine dinucleotide + diphosphate</text>
        <dbReference type="Rhea" id="RHEA:34243"/>
        <dbReference type="ChEBI" id="CHEBI:15378"/>
        <dbReference type="ChEBI" id="CHEBI:33019"/>
        <dbReference type="ChEBI" id="CHEBI:37565"/>
        <dbReference type="ChEBI" id="CHEBI:71302"/>
        <dbReference type="ChEBI" id="CHEBI:71310"/>
        <dbReference type="EC" id="2.7.7.77"/>
    </reaction>
</comment>
<comment type="cofactor">
    <cofactor evidence="1">
        <name>Mg(2+)</name>
        <dbReference type="ChEBI" id="CHEBI:18420"/>
    </cofactor>
</comment>
<comment type="subcellular location">
    <subcellularLocation>
        <location evidence="1">Cytoplasm</location>
    </subcellularLocation>
</comment>
<comment type="domain">
    <text evidence="1">The N-terminal domain determines nucleotide recognition and specific binding, while the C-terminal domain determines the specific binding to the target protein.</text>
</comment>
<comment type="similarity">
    <text evidence="1">Belongs to the MobA family.</text>
</comment>
<evidence type="ECO:0000255" key="1">
    <source>
        <dbReference type="HAMAP-Rule" id="MF_00316"/>
    </source>
</evidence>
<proteinExistence type="inferred from homology"/>
<dbReference type="EC" id="2.7.7.77" evidence="1"/>
<dbReference type="EMBL" id="BA000017">
    <property type="protein sequence ID" value="BAB58431.1"/>
    <property type="molecule type" value="Genomic_DNA"/>
</dbReference>
<dbReference type="RefSeq" id="WP_000643986.1">
    <property type="nucleotide sequence ID" value="NC_002758.2"/>
</dbReference>
<dbReference type="SMR" id="P65404"/>
<dbReference type="KEGG" id="sav:SAV2269"/>
<dbReference type="HOGENOM" id="CLU_055597_2_0_9"/>
<dbReference type="PhylomeDB" id="P65404"/>
<dbReference type="Proteomes" id="UP000002481">
    <property type="component" value="Chromosome"/>
</dbReference>
<dbReference type="GO" id="GO:0005737">
    <property type="term" value="C:cytoplasm"/>
    <property type="evidence" value="ECO:0007669"/>
    <property type="project" value="UniProtKB-SubCell"/>
</dbReference>
<dbReference type="GO" id="GO:0005525">
    <property type="term" value="F:GTP binding"/>
    <property type="evidence" value="ECO:0007669"/>
    <property type="project" value="UniProtKB-UniRule"/>
</dbReference>
<dbReference type="GO" id="GO:0046872">
    <property type="term" value="F:metal ion binding"/>
    <property type="evidence" value="ECO:0007669"/>
    <property type="project" value="UniProtKB-KW"/>
</dbReference>
<dbReference type="GO" id="GO:0061603">
    <property type="term" value="F:molybdenum cofactor guanylyltransferase activity"/>
    <property type="evidence" value="ECO:0007669"/>
    <property type="project" value="UniProtKB-EC"/>
</dbReference>
<dbReference type="GO" id="GO:0006777">
    <property type="term" value="P:Mo-molybdopterin cofactor biosynthetic process"/>
    <property type="evidence" value="ECO:0007669"/>
    <property type="project" value="UniProtKB-KW"/>
</dbReference>
<dbReference type="CDD" id="cd02503">
    <property type="entry name" value="MobA"/>
    <property type="match status" value="1"/>
</dbReference>
<dbReference type="Gene3D" id="3.90.550.10">
    <property type="entry name" value="Spore Coat Polysaccharide Biosynthesis Protein SpsA, Chain A"/>
    <property type="match status" value="1"/>
</dbReference>
<dbReference type="HAMAP" id="MF_00316">
    <property type="entry name" value="MobA"/>
    <property type="match status" value="1"/>
</dbReference>
<dbReference type="InterPro" id="IPR025877">
    <property type="entry name" value="MobA-like_NTP_Trfase"/>
</dbReference>
<dbReference type="InterPro" id="IPR013482">
    <property type="entry name" value="Molybde_CF_guanTrfase"/>
</dbReference>
<dbReference type="InterPro" id="IPR029044">
    <property type="entry name" value="Nucleotide-diphossugar_trans"/>
</dbReference>
<dbReference type="NCBIfam" id="NF001457">
    <property type="entry name" value="PRK00317.1-3"/>
    <property type="match status" value="1"/>
</dbReference>
<dbReference type="PANTHER" id="PTHR19136">
    <property type="entry name" value="MOLYBDENUM COFACTOR GUANYLYLTRANSFERASE"/>
    <property type="match status" value="1"/>
</dbReference>
<dbReference type="PANTHER" id="PTHR19136:SF81">
    <property type="entry name" value="MOLYBDENUM COFACTOR GUANYLYLTRANSFERASE"/>
    <property type="match status" value="1"/>
</dbReference>
<dbReference type="Pfam" id="PF12804">
    <property type="entry name" value="NTP_transf_3"/>
    <property type="match status" value="1"/>
</dbReference>
<dbReference type="SUPFAM" id="SSF53448">
    <property type="entry name" value="Nucleotide-diphospho-sugar transferases"/>
    <property type="match status" value="1"/>
</dbReference>
<keyword id="KW-0963">Cytoplasm</keyword>
<keyword id="KW-0342">GTP-binding</keyword>
<keyword id="KW-0460">Magnesium</keyword>
<keyword id="KW-0479">Metal-binding</keyword>
<keyword id="KW-0501">Molybdenum cofactor biosynthesis</keyword>
<keyword id="KW-0547">Nucleotide-binding</keyword>
<keyword id="KW-0808">Transferase</keyword>
<gene>
    <name evidence="1" type="primary">mobA</name>
    <name type="ordered locus">SAV2269</name>
</gene>
<feature type="chain" id="PRO_0000134912" description="Probable molybdenum cofactor guanylyltransferase">
    <location>
        <begin position="1"/>
        <end position="199"/>
    </location>
</feature>
<feature type="binding site" evidence="1">
    <location>
        <begin position="6"/>
        <end position="8"/>
    </location>
    <ligand>
        <name>GTP</name>
        <dbReference type="ChEBI" id="CHEBI:37565"/>
    </ligand>
</feature>
<feature type="binding site" evidence="1">
    <location>
        <position position="18"/>
    </location>
    <ligand>
        <name>GTP</name>
        <dbReference type="ChEBI" id="CHEBI:37565"/>
    </ligand>
</feature>
<feature type="binding site" evidence="1">
    <location>
        <position position="65"/>
    </location>
    <ligand>
        <name>GTP</name>
        <dbReference type="ChEBI" id="CHEBI:37565"/>
    </ligand>
</feature>
<feature type="binding site" evidence="1">
    <location>
        <position position="97"/>
    </location>
    <ligand>
        <name>GTP</name>
        <dbReference type="ChEBI" id="CHEBI:37565"/>
    </ligand>
</feature>
<feature type="binding site" evidence="1">
    <location>
        <position position="97"/>
    </location>
    <ligand>
        <name>Mg(2+)</name>
        <dbReference type="ChEBI" id="CHEBI:18420"/>
    </ligand>
</feature>
<reference key="1">
    <citation type="journal article" date="2001" name="Lancet">
        <title>Whole genome sequencing of meticillin-resistant Staphylococcus aureus.</title>
        <authorList>
            <person name="Kuroda M."/>
            <person name="Ohta T."/>
            <person name="Uchiyama I."/>
            <person name="Baba T."/>
            <person name="Yuzawa H."/>
            <person name="Kobayashi I."/>
            <person name="Cui L."/>
            <person name="Oguchi A."/>
            <person name="Aoki K."/>
            <person name="Nagai Y."/>
            <person name="Lian J.-Q."/>
            <person name="Ito T."/>
            <person name="Kanamori M."/>
            <person name="Matsumaru H."/>
            <person name="Maruyama A."/>
            <person name="Murakami H."/>
            <person name="Hosoyama A."/>
            <person name="Mizutani-Ui Y."/>
            <person name="Takahashi N.K."/>
            <person name="Sawano T."/>
            <person name="Inoue R."/>
            <person name="Kaito C."/>
            <person name="Sekimizu K."/>
            <person name="Hirakawa H."/>
            <person name="Kuhara S."/>
            <person name="Goto S."/>
            <person name="Yabuzaki J."/>
            <person name="Kanehisa M."/>
            <person name="Yamashita A."/>
            <person name="Oshima K."/>
            <person name="Furuya K."/>
            <person name="Yoshino C."/>
            <person name="Shiba T."/>
            <person name="Hattori M."/>
            <person name="Ogasawara N."/>
            <person name="Hayashi H."/>
            <person name="Hiramatsu K."/>
        </authorList>
    </citation>
    <scope>NUCLEOTIDE SEQUENCE [LARGE SCALE GENOMIC DNA]</scope>
    <source>
        <strain>Mu50 / ATCC 700699</strain>
    </source>
</reference>